<proteinExistence type="inferred from homology"/>
<keyword id="KW-0067">ATP-binding</keyword>
<keyword id="KW-0175">Coiled coil</keyword>
<keyword id="KW-0347">Helicase</keyword>
<keyword id="KW-0378">Hydrolase</keyword>
<keyword id="KW-0547">Nucleotide-binding</keyword>
<keyword id="KW-1185">Reference proteome</keyword>
<keyword id="KW-0694">RNA-binding</keyword>
<dbReference type="EC" id="3.6.4.13"/>
<dbReference type="EMBL" id="AP008214">
    <property type="protein sequence ID" value="BAF22927.1"/>
    <property type="status" value="ALT_SEQ"/>
    <property type="molecule type" value="Genomic_DNA"/>
</dbReference>
<dbReference type="EMBL" id="AP014964">
    <property type="status" value="NOT_ANNOTATED_CDS"/>
    <property type="molecule type" value="Genomic_DNA"/>
</dbReference>
<dbReference type="SMR" id="Q0J7Y8"/>
<dbReference type="FunCoup" id="Q0J7Y8">
    <property type="interactions" value="2686"/>
</dbReference>
<dbReference type="STRING" id="39947.Q0J7Y8"/>
<dbReference type="PaxDb" id="39947-Q0J7Y8"/>
<dbReference type="KEGG" id="dosa:Os08g0154200"/>
<dbReference type="eggNOG" id="KOG0334">
    <property type="taxonomic scope" value="Eukaryota"/>
</dbReference>
<dbReference type="InParanoid" id="Q0J7Y8"/>
<dbReference type="Proteomes" id="UP000000763">
    <property type="component" value="Chromosome 8"/>
</dbReference>
<dbReference type="Proteomes" id="UP000059680">
    <property type="component" value="Chromosome 8"/>
</dbReference>
<dbReference type="GO" id="GO:0005634">
    <property type="term" value="C:nucleus"/>
    <property type="evidence" value="ECO:0000318"/>
    <property type="project" value="GO_Central"/>
</dbReference>
<dbReference type="GO" id="GO:0005524">
    <property type="term" value="F:ATP binding"/>
    <property type="evidence" value="ECO:0007669"/>
    <property type="project" value="UniProtKB-KW"/>
</dbReference>
<dbReference type="GO" id="GO:0016887">
    <property type="term" value="F:ATP hydrolysis activity"/>
    <property type="evidence" value="ECO:0007669"/>
    <property type="project" value="RHEA"/>
</dbReference>
<dbReference type="GO" id="GO:0003723">
    <property type="term" value="F:RNA binding"/>
    <property type="evidence" value="ECO:0007669"/>
    <property type="project" value="UniProtKB-KW"/>
</dbReference>
<dbReference type="GO" id="GO:0003724">
    <property type="term" value="F:RNA helicase activity"/>
    <property type="evidence" value="ECO:0007669"/>
    <property type="project" value="UniProtKB-EC"/>
</dbReference>
<dbReference type="GO" id="GO:0000398">
    <property type="term" value="P:mRNA splicing, via spliceosome"/>
    <property type="evidence" value="ECO:0000318"/>
    <property type="project" value="GO_Central"/>
</dbReference>
<dbReference type="CDD" id="cd17953">
    <property type="entry name" value="DEADc_DDX46"/>
    <property type="match status" value="1"/>
</dbReference>
<dbReference type="CDD" id="cd22475">
    <property type="entry name" value="KH-I_AtRH42_like"/>
    <property type="match status" value="1"/>
</dbReference>
<dbReference type="CDD" id="cd18787">
    <property type="entry name" value="SF2_C_DEAD"/>
    <property type="match status" value="1"/>
</dbReference>
<dbReference type="FunFam" id="3.40.50.300:FF:000079">
    <property type="entry name" value="probable ATP-dependent RNA helicase DDX17"/>
    <property type="match status" value="1"/>
</dbReference>
<dbReference type="Gene3D" id="3.40.50.300">
    <property type="entry name" value="P-loop containing nucleotide triphosphate hydrolases"/>
    <property type="match status" value="3"/>
</dbReference>
<dbReference type="InterPro" id="IPR011545">
    <property type="entry name" value="DEAD/DEAH_box_helicase_dom"/>
</dbReference>
<dbReference type="InterPro" id="IPR014001">
    <property type="entry name" value="Helicase_ATP-bd"/>
</dbReference>
<dbReference type="InterPro" id="IPR001650">
    <property type="entry name" value="Helicase_C-like"/>
</dbReference>
<dbReference type="InterPro" id="IPR027417">
    <property type="entry name" value="P-loop_NTPase"/>
</dbReference>
<dbReference type="InterPro" id="IPR056149">
    <property type="entry name" value="PRP5/DDX46/KHDC4_KH"/>
</dbReference>
<dbReference type="InterPro" id="IPR000629">
    <property type="entry name" value="RNA-helicase_DEAD-box_CS"/>
</dbReference>
<dbReference type="InterPro" id="IPR014014">
    <property type="entry name" value="RNA_helicase_DEAD_Q_motif"/>
</dbReference>
<dbReference type="PANTHER" id="PTHR47958">
    <property type="entry name" value="ATP-DEPENDENT RNA HELICASE DBP3"/>
    <property type="match status" value="1"/>
</dbReference>
<dbReference type="Pfam" id="PF00270">
    <property type="entry name" value="DEAD"/>
    <property type="match status" value="1"/>
</dbReference>
<dbReference type="Pfam" id="PF00271">
    <property type="entry name" value="Helicase_C"/>
    <property type="match status" value="1"/>
</dbReference>
<dbReference type="Pfam" id="PF23469">
    <property type="entry name" value="KH_12"/>
    <property type="match status" value="1"/>
</dbReference>
<dbReference type="SMART" id="SM00487">
    <property type="entry name" value="DEXDc"/>
    <property type="match status" value="1"/>
</dbReference>
<dbReference type="SMART" id="SM00490">
    <property type="entry name" value="HELICc"/>
    <property type="match status" value="1"/>
</dbReference>
<dbReference type="SUPFAM" id="SSF52540">
    <property type="entry name" value="P-loop containing nucleoside triphosphate hydrolases"/>
    <property type="match status" value="2"/>
</dbReference>
<dbReference type="PROSITE" id="PS00039">
    <property type="entry name" value="DEAD_ATP_HELICASE"/>
    <property type="match status" value="1"/>
</dbReference>
<dbReference type="PROSITE" id="PS51192">
    <property type="entry name" value="HELICASE_ATP_BIND_1"/>
    <property type="match status" value="1"/>
</dbReference>
<dbReference type="PROSITE" id="PS51194">
    <property type="entry name" value="HELICASE_CTER"/>
    <property type="match status" value="1"/>
</dbReference>
<dbReference type="PROSITE" id="PS51195">
    <property type="entry name" value="Q_MOTIF"/>
    <property type="match status" value="1"/>
</dbReference>
<reference key="1">
    <citation type="journal article" date="2005" name="Nature">
        <title>The map-based sequence of the rice genome.</title>
        <authorList>
            <consortium name="International rice genome sequencing project (IRGSP)"/>
        </authorList>
    </citation>
    <scope>NUCLEOTIDE SEQUENCE [LARGE SCALE GENOMIC DNA]</scope>
    <source>
        <strain>cv. Nipponbare</strain>
    </source>
</reference>
<reference key="2">
    <citation type="journal article" date="2008" name="Nucleic Acids Res.">
        <title>The rice annotation project database (RAP-DB): 2008 update.</title>
        <authorList>
            <consortium name="The rice annotation project (RAP)"/>
        </authorList>
    </citation>
    <scope>GENOME REANNOTATION</scope>
    <source>
        <strain>cv. Nipponbare</strain>
    </source>
</reference>
<reference key="3">
    <citation type="journal article" date="2013" name="Rice">
        <title>Improvement of the Oryza sativa Nipponbare reference genome using next generation sequence and optical map data.</title>
        <authorList>
            <person name="Kawahara Y."/>
            <person name="de la Bastide M."/>
            <person name="Hamilton J.P."/>
            <person name="Kanamori H."/>
            <person name="McCombie W.R."/>
            <person name="Ouyang S."/>
            <person name="Schwartz D.C."/>
            <person name="Tanaka T."/>
            <person name="Wu J."/>
            <person name="Zhou S."/>
            <person name="Childs K.L."/>
            <person name="Davidson R.M."/>
            <person name="Lin H."/>
            <person name="Quesada-Ocampo L."/>
            <person name="Vaillancourt B."/>
            <person name="Sakai H."/>
            <person name="Lee S.S."/>
            <person name="Kim J."/>
            <person name="Numa H."/>
            <person name="Itoh T."/>
            <person name="Buell C.R."/>
            <person name="Matsumoto T."/>
        </authorList>
    </citation>
    <scope>GENOME REANNOTATION</scope>
    <source>
        <strain>cv. Nipponbare</strain>
    </source>
</reference>
<feature type="chain" id="PRO_0000282502" description="DEAD-box ATP-dependent RNA helicase 45">
    <location>
        <begin position="1"/>
        <end position="947"/>
    </location>
</feature>
<feature type="domain" description="Helicase ATP-binding" evidence="2">
    <location>
        <begin position="316"/>
        <end position="494"/>
    </location>
</feature>
<feature type="domain" description="Helicase C-terminal">
    <location>
        <begin position="479"/>
        <end position="647"/>
    </location>
</feature>
<feature type="region of interest" description="Disordered" evidence="3">
    <location>
        <begin position="1"/>
        <end position="132"/>
    </location>
</feature>
<feature type="region of interest" description="Disordered" evidence="3">
    <location>
        <begin position="159"/>
        <end position="221"/>
    </location>
</feature>
<feature type="region of interest" description="Disordered" evidence="3">
    <location>
        <begin position="658"/>
        <end position="710"/>
    </location>
</feature>
<feature type="coiled-coil region" evidence="1">
    <location>
        <begin position="854"/>
        <end position="879"/>
    </location>
</feature>
<feature type="short sequence motif" description="Q motif">
    <location>
        <begin position="285"/>
        <end position="313"/>
    </location>
</feature>
<feature type="short sequence motif" description="DEAD box">
    <location>
        <begin position="442"/>
        <end position="445"/>
    </location>
</feature>
<feature type="compositionally biased region" description="Acidic residues" evidence="3">
    <location>
        <begin position="1"/>
        <end position="14"/>
    </location>
</feature>
<feature type="compositionally biased region" description="Basic and acidic residues" evidence="3">
    <location>
        <begin position="15"/>
        <end position="31"/>
    </location>
</feature>
<feature type="compositionally biased region" description="Basic and acidic residues" evidence="3">
    <location>
        <begin position="42"/>
        <end position="61"/>
    </location>
</feature>
<feature type="compositionally biased region" description="Low complexity" evidence="3">
    <location>
        <begin position="62"/>
        <end position="82"/>
    </location>
</feature>
<feature type="compositionally biased region" description="Acidic residues" evidence="3">
    <location>
        <begin position="88"/>
        <end position="108"/>
    </location>
</feature>
<feature type="compositionally biased region" description="Acidic residues" evidence="3">
    <location>
        <begin position="196"/>
        <end position="219"/>
    </location>
</feature>
<feature type="compositionally biased region" description="Acidic residues" evidence="3">
    <location>
        <begin position="697"/>
        <end position="706"/>
    </location>
</feature>
<feature type="binding site" evidence="2">
    <location>
        <begin position="329"/>
        <end position="336"/>
    </location>
    <ligand>
        <name>ATP</name>
        <dbReference type="ChEBI" id="CHEBI:30616"/>
    </ligand>
</feature>
<accession>Q0J7Y8</accession>
<organism>
    <name type="scientific">Oryza sativa subsp. japonica</name>
    <name type="common">Rice</name>
    <dbReference type="NCBI Taxonomy" id="39947"/>
    <lineage>
        <taxon>Eukaryota</taxon>
        <taxon>Viridiplantae</taxon>
        <taxon>Streptophyta</taxon>
        <taxon>Embryophyta</taxon>
        <taxon>Tracheophyta</taxon>
        <taxon>Spermatophyta</taxon>
        <taxon>Magnoliopsida</taxon>
        <taxon>Liliopsida</taxon>
        <taxon>Poales</taxon>
        <taxon>Poaceae</taxon>
        <taxon>BOP clade</taxon>
        <taxon>Oryzoideae</taxon>
        <taxon>Oryzeae</taxon>
        <taxon>Oryzinae</taxon>
        <taxon>Oryza</taxon>
        <taxon>Oryza sativa</taxon>
    </lineage>
</organism>
<sequence>MEEEEVVVVVDEEESERRRQKMIEEEKKRLDEEMELRRRRVKEWQEQKRLEEEEAKRREQEAAAGAGTPAAAAGADGDSNAGKKWTLDGEESDEEGYKEDSQNAEDDGGITADLPSEVNDANVAAPMEEDEIDPLDAFMSSMVLPEVAKLETAVASMESMPASNMGDKNGKSAKDAVSNGDKKGQKKAMGRIMQGDDSDSDYDDDDDDEGGSKDEDDEEFMKRVKKTKVEKLAIVDHSKIEYQPFRKNLYIEVKDITMMTGEEVATYRKNLELKVHGKDVPKPIKTWVQSGLTSKLLDTIKKLGFEKPMPIQAQALPIIMSGRDCIGIAKTGSGKTLAFVLPMLRHVKDQPPVVPGDGPIGLIMAPTRELVVQIHSDIKKFAKSLGINCVAIYGGSGVAQQISELKRGAEIVVCTPGRMIDILCTSSGKITNLRRVTFLVMDEADRMFDMGFEPQITRIVQNTRPDRQTVLFSAIFPRQVEILARKVLTKPVEIQVGGRSVVNKDITQLVEVRPENERFLRLLELLGEWFDRGKILVFVHSQDKCDSLLKDLFQRGYPCLSLHGGKDQTDRESTLADFKSNLELVVNYDVPNHYEDYVHRVGRTGHAGRKGFAVTFISDEEERYAPDLAKALELSEQAVPQDLKGLADRFMAKVKQGTEQAHGTGYGGSGFKFNEEEDEARRSAKKAQAREYGYEEDKSDSDSDEEGGVRKAGGDLAAQAIAAAQAAATLAAAKAASNANQQVQSTNAGSLLSIPVVANAPNNEATARALQAALNIQQNLARIQAHVVPEHYEVELDINDFPQNARWKITHKETLGPIQDWTEAAITTRGTFIPQGKIVGANERKLYLFIEGPTELSVKKAKSELKRVLEDCANHALNLPGSAQTGKTANSEMQGFLVKVFLGRWTAILVFLDDGVICNIRAEKLDKWQVRVFYVKVADPLGYSITE</sequence>
<comment type="catalytic activity">
    <reaction>
        <text>ATP + H2O = ADP + phosphate + H(+)</text>
        <dbReference type="Rhea" id="RHEA:13065"/>
        <dbReference type="ChEBI" id="CHEBI:15377"/>
        <dbReference type="ChEBI" id="CHEBI:15378"/>
        <dbReference type="ChEBI" id="CHEBI:30616"/>
        <dbReference type="ChEBI" id="CHEBI:43474"/>
        <dbReference type="ChEBI" id="CHEBI:456216"/>
        <dbReference type="EC" id="3.6.4.13"/>
    </reaction>
</comment>
<comment type="domain">
    <text>The Q motif is unique to and characteristic of the DEAD box family of RNA helicases and controls ATP binding and hydrolysis.</text>
</comment>
<comment type="similarity">
    <text evidence="4">Belongs to the DEAD box helicase family. DDX46/PRP5 subfamily.</text>
</comment>
<comment type="sequence caution" evidence="4">
    <conflict type="erroneous gene model prediction">
        <sequence resource="EMBL-CDS" id="BAF22927"/>
    </conflict>
</comment>
<evidence type="ECO:0000255" key="1"/>
<evidence type="ECO:0000255" key="2">
    <source>
        <dbReference type="PROSITE-ProRule" id="PRU00541"/>
    </source>
</evidence>
<evidence type="ECO:0000256" key="3">
    <source>
        <dbReference type="SAM" id="MobiDB-lite"/>
    </source>
</evidence>
<evidence type="ECO:0000305" key="4"/>
<name>RH45_ORYSJ</name>
<gene>
    <name type="ordered locus">Os08g0154200</name>
    <name type="ordered locus">LOC_Os08g05810</name>
</gene>
<protein>
    <recommendedName>
        <fullName>DEAD-box ATP-dependent RNA helicase 45</fullName>
        <ecNumber>3.6.4.13</ecNumber>
    </recommendedName>
</protein>